<evidence type="ECO:0000255" key="1">
    <source>
        <dbReference type="HAMAP-Rule" id="MF_01026"/>
    </source>
</evidence>
<sequence length="469" mass="50828">MSAPRTLYDKIWDDHLVDEQPDGTCLLYIDRHLVHEVTSPQAFEGLRMTGRKVRAPEKTLAVVDHNVPTSPDRHLGIKNEESRIQVEALATNAAEFGVEYYSASDKRQGIVHIVGPEQGFTLPGMTIVCGDSHTSTHGAFGALAHGIGTSEVEHVLATQTLIQKKAKNMLVRVDGLLPPHVTAKDIILAIIGEIGTAGGTGHVIEFAGEAIRSLSMEGRMTICNMTIEGGARAGLIAPDEKTFEYIKGKPRAPKGEALEQAIAYWKTLQTDEGAHYDRVVVLDAASLPPIVSWGSSPEDVISVQGIVPNPDDIQDETKRTSKWRALDYMGLKPGTKMTDITLDRVFIGSCTNGRIEDLREVAKVVEGKTVASTVDAMIVPGSGLVKEQAEAEGLDKIFKAAGFDWREPGCSMCLAMNDDRLKPGERCASTSNRNFEGRQGFKGRTHLVSPAMAAAAAIAGHFVDIREWN</sequence>
<dbReference type="EC" id="4.2.1.33" evidence="1"/>
<dbReference type="EMBL" id="CP001191">
    <property type="protein sequence ID" value="ACI57021.1"/>
    <property type="molecule type" value="Genomic_DNA"/>
</dbReference>
<dbReference type="RefSeq" id="WP_003589724.1">
    <property type="nucleotide sequence ID" value="NC_011369.1"/>
</dbReference>
<dbReference type="SMR" id="B5ZTI5"/>
<dbReference type="STRING" id="395492.Rleg2_3759"/>
<dbReference type="KEGG" id="rlt:Rleg2_3759"/>
<dbReference type="eggNOG" id="COG0065">
    <property type="taxonomic scope" value="Bacteria"/>
</dbReference>
<dbReference type="HOGENOM" id="CLU_006714_3_4_5"/>
<dbReference type="UniPathway" id="UPA00048">
    <property type="reaction ID" value="UER00071"/>
</dbReference>
<dbReference type="Proteomes" id="UP000008330">
    <property type="component" value="Chromosome"/>
</dbReference>
<dbReference type="GO" id="GO:0003861">
    <property type="term" value="F:3-isopropylmalate dehydratase activity"/>
    <property type="evidence" value="ECO:0007669"/>
    <property type="project" value="UniProtKB-UniRule"/>
</dbReference>
<dbReference type="GO" id="GO:0051539">
    <property type="term" value="F:4 iron, 4 sulfur cluster binding"/>
    <property type="evidence" value="ECO:0007669"/>
    <property type="project" value="UniProtKB-KW"/>
</dbReference>
<dbReference type="GO" id="GO:0046872">
    <property type="term" value="F:metal ion binding"/>
    <property type="evidence" value="ECO:0007669"/>
    <property type="project" value="UniProtKB-KW"/>
</dbReference>
<dbReference type="GO" id="GO:0009098">
    <property type="term" value="P:L-leucine biosynthetic process"/>
    <property type="evidence" value="ECO:0007669"/>
    <property type="project" value="UniProtKB-UniRule"/>
</dbReference>
<dbReference type="CDD" id="cd01583">
    <property type="entry name" value="IPMI"/>
    <property type="match status" value="1"/>
</dbReference>
<dbReference type="FunFam" id="3.30.499.10:FF:000006">
    <property type="entry name" value="3-isopropylmalate dehydratase large subunit"/>
    <property type="match status" value="1"/>
</dbReference>
<dbReference type="FunFam" id="3.30.499.10:FF:000007">
    <property type="entry name" value="3-isopropylmalate dehydratase large subunit"/>
    <property type="match status" value="1"/>
</dbReference>
<dbReference type="Gene3D" id="3.30.499.10">
    <property type="entry name" value="Aconitase, domain 3"/>
    <property type="match status" value="2"/>
</dbReference>
<dbReference type="HAMAP" id="MF_01026">
    <property type="entry name" value="LeuC_type1"/>
    <property type="match status" value="1"/>
</dbReference>
<dbReference type="InterPro" id="IPR004430">
    <property type="entry name" value="3-IsopropMal_deHydase_lsu"/>
</dbReference>
<dbReference type="InterPro" id="IPR015931">
    <property type="entry name" value="Acnase/IPM_dHydase_lsu_aba_1/3"/>
</dbReference>
<dbReference type="InterPro" id="IPR001030">
    <property type="entry name" value="Acoase/IPM_deHydtase_lsu_aba"/>
</dbReference>
<dbReference type="InterPro" id="IPR018136">
    <property type="entry name" value="Aconitase_4Fe-4S_BS"/>
</dbReference>
<dbReference type="InterPro" id="IPR036008">
    <property type="entry name" value="Aconitase_4Fe-4S_dom"/>
</dbReference>
<dbReference type="InterPro" id="IPR050067">
    <property type="entry name" value="IPM_dehydratase_rel_enz"/>
</dbReference>
<dbReference type="InterPro" id="IPR033941">
    <property type="entry name" value="IPMI_cat"/>
</dbReference>
<dbReference type="NCBIfam" id="TIGR00170">
    <property type="entry name" value="leuC"/>
    <property type="match status" value="1"/>
</dbReference>
<dbReference type="NCBIfam" id="NF004016">
    <property type="entry name" value="PRK05478.1"/>
    <property type="match status" value="1"/>
</dbReference>
<dbReference type="NCBIfam" id="NF009116">
    <property type="entry name" value="PRK12466.1"/>
    <property type="match status" value="1"/>
</dbReference>
<dbReference type="PANTHER" id="PTHR43822:SF9">
    <property type="entry name" value="3-ISOPROPYLMALATE DEHYDRATASE"/>
    <property type="match status" value="1"/>
</dbReference>
<dbReference type="PANTHER" id="PTHR43822">
    <property type="entry name" value="HOMOACONITASE, MITOCHONDRIAL-RELATED"/>
    <property type="match status" value="1"/>
</dbReference>
<dbReference type="Pfam" id="PF00330">
    <property type="entry name" value="Aconitase"/>
    <property type="match status" value="1"/>
</dbReference>
<dbReference type="PRINTS" id="PR00415">
    <property type="entry name" value="ACONITASE"/>
</dbReference>
<dbReference type="SUPFAM" id="SSF53732">
    <property type="entry name" value="Aconitase iron-sulfur domain"/>
    <property type="match status" value="1"/>
</dbReference>
<dbReference type="PROSITE" id="PS00450">
    <property type="entry name" value="ACONITASE_1"/>
    <property type="match status" value="1"/>
</dbReference>
<dbReference type="PROSITE" id="PS01244">
    <property type="entry name" value="ACONITASE_2"/>
    <property type="match status" value="1"/>
</dbReference>
<keyword id="KW-0004">4Fe-4S</keyword>
<keyword id="KW-0028">Amino-acid biosynthesis</keyword>
<keyword id="KW-0100">Branched-chain amino acid biosynthesis</keyword>
<keyword id="KW-0408">Iron</keyword>
<keyword id="KW-0411">Iron-sulfur</keyword>
<keyword id="KW-0432">Leucine biosynthesis</keyword>
<keyword id="KW-0456">Lyase</keyword>
<keyword id="KW-0479">Metal-binding</keyword>
<keyword id="KW-1185">Reference proteome</keyword>
<feature type="chain" id="PRO_1000135709" description="3-isopropylmalate dehydratase large subunit">
    <location>
        <begin position="1"/>
        <end position="469"/>
    </location>
</feature>
<feature type="binding site" evidence="1">
    <location>
        <position position="350"/>
    </location>
    <ligand>
        <name>[4Fe-4S] cluster</name>
        <dbReference type="ChEBI" id="CHEBI:49883"/>
    </ligand>
</feature>
<feature type="binding site" evidence="1">
    <location>
        <position position="410"/>
    </location>
    <ligand>
        <name>[4Fe-4S] cluster</name>
        <dbReference type="ChEBI" id="CHEBI:49883"/>
    </ligand>
</feature>
<feature type="binding site" evidence="1">
    <location>
        <position position="413"/>
    </location>
    <ligand>
        <name>[4Fe-4S] cluster</name>
        <dbReference type="ChEBI" id="CHEBI:49883"/>
    </ligand>
</feature>
<comment type="function">
    <text evidence="1">Catalyzes the isomerization between 2-isopropylmalate and 3-isopropylmalate, via the formation of 2-isopropylmaleate.</text>
</comment>
<comment type="catalytic activity">
    <reaction evidence="1">
        <text>(2R,3S)-3-isopropylmalate = (2S)-2-isopropylmalate</text>
        <dbReference type="Rhea" id="RHEA:32287"/>
        <dbReference type="ChEBI" id="CHEBI:1178"/>
        <dbReference type="ChEBI" id="CHEBI:35121"/>
        <dbReference type="EC" id="4.2.1.33"/>
    </reaction>
</comment>
<comment type="cofactor">
    <cofactor evidence="1">
        <name>[4Fe-4S] cluster</name>
        <dbReference type="ChEBI" id="CHEBI:49883"/>
    </cofactor>
    <text evidence="1">Binds 1 [4Fe-4S] cluster per subunit.</text>
</comment>
<comment type="pathway">
    <text evidence="1">Amino-acid biosynthesis; L-leucine biosynthesis; L-leucine from 3-methyl-2-oxobutanoate: step 2/4.</text>
</comment>
<comment type="subunit">
    <text evidence="1">Heterodimer of LeuC and LeuD.</text>
</comment>
<comment type="similarity">
    <text evidence="1">Belongs to the aconitase/IPM isomerase family. LeuC type 1 subfamily.</text>
</comment>
<name>LEUC_RHILW</name>
<protein>
    <recommendedName>
        <fullName evidence="1">3-isopropylmalate dehydratase large subunit</fullName>
        <ecNumber evidence="1">4.2.1.33</ecNumber>
    </recommendedName>
    <alternativeName>
        <fullName evidence="1">Alpha-IPM isomerase</fullName>
        <shortName evidence="1">IPMI</shortName>
    </alternativeName>
    <alternativeName>
        <fullName evidence="1">Isopropylmalate isomerase</fullName>
    </alternativeName>
</protein>
<organism>
    <name type="scientific">Rhizobium leguminosarum bv. trifolii (strain WSM2304)</name>
    <dbReference type="NCBI Taxonomy" id="395492"/>
    <lineage>
        <taxon>Bacteria</taxon>
        <taxon>Pseudomonadati</taxon>
        <taxon>Pseudomonadota</taxon>
        <taxon>Alphaproteobacteria</taxon>
        <taxon>Hyphomicrobiales</taxon>
        <taxon>Rhizobiaceae</taxon>
        <taxon>Rhizobium/Agrobacterium group</taxon>
        <taxon>Rhizobium</taxon>
    </lineage>
</organism>
<reference key="1">
    <citation type="journal article" date="2010" name="Stand. Genomic Sci.">
        <title>Complete genome sequence of Rhizobium leguminosarum bv trifolii strain WSM2304, an effective microsymbiont of the South American clover Trifolium polymorphum.</title>
        <authorList>
            <person name="Reeve W."/>
            <person name="O'Hara G."/>
            <person name="Chain P."/>
            <person name="Ardley J."/>
            <person name="Brau L."/>
            <person name="Nandesena K."/>
            <person name="Tiwari R."/>
            <person name="Malfatti S."/>
            <person name="Kiss H."/>
            <person name="Lapidus A."/>
            <person name="Copeland A."/>
            <person name="Nolan M."/>
            <person name="Land M."/>
            <person name="Ivanova N."/>
            <person name="Mavromatis K."/>
            <person name="Markowitz V."/>
            <person name="Kyrpides N."/>
            <person name="Melino V."/>
            <person name="Denton M."/>
            <person name="Yates R."/>
            <person name="Howieson J."/>
        </authorList>
    </citation>
    <scope>NUCLEOTIDE SEQUENCE [LARGE SCALE GENOMIC DNA]</scope>
    <source>
        <strain>WSM2304</strain>
    </source>
</reference>
<gene>
    <name evidence="1" type="primary">leuC</name>
    <name type="ordered locus">Rleg2_3759</name>
</gene>
<proteinExistence type="inferred from homology"/>
<accession>B5ZTI5</accession>